<organism>
    <name type="scientific">Anopheles gambiae</name>
    <name type="common">African malaria mosquito</name>
    <dbReference type="NCBI Taxonomy" id="7165"/>
    <lineage>
        <taxon>Eukaryota</taxon>
        <taxon>Metazoa</taxon>
        <taxon>Ecdysozoa</taxon>
        <taxon>Arthropoda</taxon>
        <taxon>Hexapoda</taxon>
        <taxon>Insecta</taxon>
        <taxon>Pterygota</taxon>
        <taxon>Neoptera</taxon>
        <taxon>Endopterygota</taxon>
        <taxon>Diptera</taxon>
        <taxon>Nematocera</taxon>
        <taxon>Culicoidea</taxon>
        <taxon>Culicidae</taxon>
        <taxon>Anophelinae</taxon>
        <taxon>Anopheles</taxon>
    </lineage>
</organism>
<keyword id="KW-0175">Coiled coil</keyword>
<keyword id="KW-1185">Reference proteome</keyword>
<gene>
    <name type="ORF">AGAP008008</name>
</gene>
<evidence type="ECO:0000255" key="1"/>
<evidence type="ECO:0000256" key="2">
    <source>
        <dbReference type="SAM" id="MobiDB-lite"/>
    </source>
</evidence>
<evidence type="ECO:0000305" key="3"/>
<sequence length="64" mass="6882">MSGREGGKKKPLKAPKKEQSEMDEDTAAFKAKQKEQQKALEAAKQKATKGGPLLQGGIKKSGKK</sequence>
<feature type="chain" id="PRO_0000248076" description="Translation machinery-associated protein 7 homolog">
    <location>
        <begin position="1"/>
        <end position="64"/>
    </location>
</feature>
<feature type="region of interest" description="Disordered" evidence="2">
    <location>
        <begin position="1"/>
        <end position="64"/>
    </location>
</feature>
<feature type="coiled-coil region" evidence="1">
    <location>
        <begin position="21"/>
        <end position="50"/>
    </location>
</feature>
<feature type="compositionally biased region" description="Basic and acidic residues" evidence="2">
    <location>
        <begin position="32"/>
        <end position="44"/>
    </location>
</feature>
<accession>Q7PNC0</accession>
<comment type="similarity">
    <text evidence="3">Belongs to the TMA7 family.</text>
</comment>
<name>TMA7_ANOGA</name>
<proteinExistence type="inferred from homology"/>
<dbReference type="EMBL" id="AAAB01008964">
    <property type="protein sequence ID" value="EAA12432.3"/>
    <property type="molecule type" value="Genomic_DNA"/>
</dbReference>
<dbReference type="RefSeq" id="XP_317456.2">
    <property type="nucleotide sequence ID" value="XM_317456.3"/>
</dbReference>
<dbReference type="FunCoup" id="Q7PNC0">
    <property type="interactions" value="1033"/>
</dbReference>
<dbReference type="STRING" id="7165.Q7PNC0"/>
<dbReference type="PaxDb" id="7165-AGAP008008-PA"/>
<dbReference type="EnsemblMetazoa" id="AGAP008008-RA">
    <property type="protein sequence ID" value="AGAP008008-PA"/>
    <property type="gene ID" value="AGAP008008"/>
</dbReference>
<dbReference type="VEuPathDB" id="VectorBase:AGAMI1_007987"/>
<dbReference type="VEuPathDB" id="VectorBase:AGAP008008"/>
<dbReference type="eggNOG" id="KOG4766">
    <property type="taxonomic scope" value="Eukaryota"/>
</dbReference>
<dbReference type="HOGENOM" id="CLU_184661_2_0_1"/>
<dbReference type="InParanoid" id="Q7PNC0"/>
<dbReference type="OMA" id="KKGPMNT"/>
<dbReference type="Proteomes" id="UP000007062">
    <property type="component" value="Chromosome 3R"/>
</dbReference>
<dbReference type="InterPro" id="IPR015157">
    <property type="entry name" value="TMA7"/>
</dbReference>
<dbReference type="PANTHER" id="PTHR28632">
    <property type="entry name" value="TRANSLATION MACHINERY-ASSOCIATED PROTEIN 7"/>
    <property type="match status" value="1"/>
</dbReference>
<dbReference type="Pfam" id="PF09072">
    <property type="entry name" value="TMA7"/>
    <property type="match status" value="1"/>
</dbReference>
<protein>
    <recommendedName>
        <fullName>Translation machinery-associated protein 7 homolog</fullName>
    </recommendedName>
    <alternativeName>
        <fullName>Coiled-coil domain-containing protein 72 homolog</fullName>
    </alternativeName>
</protein>
<reference key="1">
    <citation type="journal article" date="2002" name="Science">
        <title>The genome sequence of the malaria mosquito Anopheles gambiae.</title>
        <authorList>
            <person name="Holt R.A."/>
            <person name="Subramanian G.M."/>
            <person name="Halpern A."/>
            <person name="Sutton G.G."/>
            <person name="Charlab R."/>
            <person name="Nusskern D.R."/>
            <person name="Wincker P."/>
            <person name="Clark A.G."/>
            <person name="Ribeiro J.M.C."/>
            <person name="Wides R."/>
            <person name="Salzberg S.L."/>
            <person name="Loftus B.J."/>
            <person name="Yandell M.D."/>
            <person name="Majoros W.H."/>
            <person name="Rusch D.B."/>
            <person name="Lai Z."/>
            <person name="Kraft C.L."/>
            <person name="Abril J.F."/>
            <person name="Anthouard V."/>
            <person name="Arensburger P."/>
            <person name="Atkinson P.W."/>
            <person name="Baden H."/>
            <person name="de Berardinis V."/>
            <person name="Baldwin D."/>
            <person name="Benes V."/>
            <person name="Biedler J."/>
            <person name="Blass C."/>
            <person name="Bolanos R."/>
            <person name="Boscus D."/>
            <person name="Barnstead M."/>
            <person name="Cai S."/>
            <person name="Center A."/>
            <person name="Chaturverdi K."/>
            <person name="Christophides G.K."/>
            <person name="Chrystal M.A.M."/>
            <person name="Clamp M."/>
            <person name="Cravchik A."/>
            <person name="Curwen V."/>
            <person name="Dana A."/>
            <person name="Delcher A."/>
            <person name="Dew I."/>
            <person name="Evans C.A."/>
            <person name="Flanigan M."/>
            <person name="Grundschober-Freimoser A."/>
            <person name="Friedli L."/>
            <person name="Gu Z."/>
            <person name="Guan P."/>
            <person name="Guigo R."/>
            <person name="Hillenmeyer M.E."/>
            <person name="Hladun S.L."/>
            <person name="Hogan J.R."/>
            <person name="Hong Y.S."/>
            <person name="Hoover J."/>
            <person name="Jaillon O."/>
            <person name="Ke Z."/>
            <person name="Kodira C.D."/>
            <person name="Kokoza E."/>
            <person name="Koutsos A."/>
            <person name="Letunic I."/>
            <person name="Levitsky A.A."/>
            <person name="Liang Y."/>
            <person name="Lin J.-J."/>
            <person name="Lobo N.F."/>
            <person name="Lopez J.R."/>
            <person name="Malek J.A."/>
            <person name="McIntosh T.C."/>
            <person name="Meister S."/>
            <person name="Miller J.R."/>
            <person name="Mobarry C."/>
            <person name="Mongin E."/>
            <person name="Murphy S.D."/>
            <person name="O'Brochta D.A."/>
            <person name="Pfannkoch C."/>
            <person name="Qi R."/>
            <person name="Regier M.A."/>
            <person name="Remington K."/>
            <person name="Shao H."/>
            <person name="Sharakhova M.V."/>
            <person name="Sitter C.D."/>
            <person name="Shetty J."/>
            <person name="Smith T.J."/>
            <person name="Strong R."/>
            <person name="Sun J."/>
            <person name="Thomasova D."/>
            <person name="Ton L.Q."/>
            <person name="Topalis P."/>
            <person name="Tu Z.J."/>
            <person name="Unger M.F."/>
            <person name="Walenz B."/>
            <person name="Wang A.H."/>
            <person name="Wang J."/>
            <person name="Wang M."/>
            <person name="Wang X."/>
            <person name="Woodford K.J."/>
            <person name="Wortman J.R."/>
            <person name="Wu M."/>
            <person name="Yao A."/>
            <person name="Zdobnov E.M."/>
            <person name="Zhang H."/>
            <person name="Zhao Q."/>
            <person name="Zhao S."/>
            <person name="Zhu S.C."/>
            <person name="Zhimulev I."/>
            <person name="Coluzzi M."/>
            <person name="della Torre A."/>
            <person name="Roth C.W."/>
            <person name="Louis C."/>
            <person name="Kalush F."/>
            <person name="Mural R.J."/>
            <person name="Myers E.W."/>
            <person name="Adams M.D."/>
            <person name="Smith H.O."/>
            <person name="Broder S."/>
            <person name="Gardner M.J."/>
            <person name="Fraser C.M."/>
            <person name="Birney E."/>
            <person name="Bork P."/>
            <person name="Brey P.T."/>
            <person name="Venter J.C."/>
            <person name="Weissenbach J."/>
            <person name="Kafatos F.C."/>
            <person name="Collins F.H."/>
            <person name="Hoffman S.L."/>
        </authorList>
    </citation>
    <scope>NUCLEOTIDE SEQUENCE [LARGE SCALE GENOMIC DNA]</scope>
    <source>
        <strain>PEST</strain>
    </source>
</reference>